<keyword id="KW-0067">ATP-binding</keyword>
<keyword id="KW-0547">Nucleotide-binding</keyword>
<keyword id="KW-0548">Nucleotidyltransferase</keyword>
<keyword id="KW-0808">Transferase</keyword>
<organism>
    <name type="scientific">Pseudomonas fluorescens (strain Pf0-1)</name>
    <dbReference type="NCBI Taxonomy" id="205922"/>
    <lineage>
        <taxon>Bacteria</taxon>
        <taxon>Pseudomonadati</taxon>
        <taxon>Pseudomonadota</taxon>
        <taxon>Gammaproteobacteria</taxon>
        <taxon>Pseudomonadales</taxon>
        <taxon>Pseudomonadaceae</taxon>
        <taxon>Pseudomonas</taxon>
    </lineage>
</organism>
<feature type="chain" id="PRO_1000008972" description="Sulfate adenylyltransferase subunit 2">
    <location>
        <begin position="1"/>
        <end position="305"/>
    </location>
</feature>
<sequence length="305" mass="35321">MVDKLTHLKQLEAESIHIIREVAAEFDNPVMLYSIGKDSAVMLHLARKAFFPGKLPFPVMHVDTRWKFQEMYKFRDKMVEELGLDLITHINPDGVAQNINPFTHGSAKHTDIMKTEGLKQALDKHGFDAAFGGARRDEEKSRAKERVYSFRDSKHRWDPKNQRPELWNVYNGKVNKGESIRVFPLSNWTELDIWQYIYLEGIPIVPLYFAAEREVIEKNGTLIMIDDERILEHLSDEDKARIVKKKVRFRTLGCYPLTGAVESEAESLTDIIQEMLLTRTSERQGRVIDHDGAGSMEDKKRQGYF</sequence>
<accession>Q3KHY6</accession>
<evidence type="ECO:0000255" key="1">
    <source>
        <dbReference type="HAMAP-Rule" id="MF_00064"/>
    </source>
</evidence>
<protein>
    <recommendedName>
        <fullName evidence="1">Sulfate adenylyltransferase subunit 2</fullName>
        <ecNumber evidence="1">2.7.7.4</ecNumber>
    </recommendedName>
    <alternativeName>
        <fullName evidence="1">ATP-sulfurylase small subunit</fullName>
    </alternativeName>
    <alternativeName>
        <fullName evidence="1">Sulfate adenylate transferase</fullName>
        <shortName evidence="1">SAT</shortName>
    </alternativeName>
</protein>
<proteinExistence type="inferred from homology"/>
<dbReference type="EC" id="2.7.7.4" evidence="1"/>
<dbReference type="EMBL" id="CP000094">
    <property type="protein sequence ID" value="ABA72620.1"/>
    <property type="molecule type" value="Genomic_DNA"/>
</dbReference>
<dbReference type="RefSeq" id="WP_007912374.1">
    <property type="nucleotide sequence ID" value="NC_007492.2"/>
</dbReference>
<dbReference type="SMR" id="Q3KHY6"/>
<dbReference type="GeneID" id="93487603"/>
<dbReference type="KEGG" id="pfo:Pfl01_0877"/>
<dbReference type="eggNOG" id="COG0175">
    <property type="taxonomic scope" value="Bacteria"/>
</dbReference>
<dbReference type="HOGENOM" id="CLU_043026_0_0_6"/>
<dbReference type="UniPathway" id="UPA00140">
    <property type="reaction ID" value="UER00204"/>
</dbReference>
<dbReference type="Proteomes" id="UP000002704">
    <property type="component" value="Chromosome"/>
</dbReference>
<dbReference type="GO" id="GO:0005524">
    <property type="term" value="F:ATP binding"/>
    <property type="evidence" value="ECO:0007669"/>
    <property type="project" value="UniProtKB-KW"/>
</dbReference>
<dbReference type="GO" id="GO:0004781">
    <property type="term" value="F:sulfate adenylyltransferase (ATP) activity"/>
    <property type="evidence" value="ECO:0007669"/>
    <property type="project" value="UniProtKB-UniRule"/>
</dbReference>
<dbReference type="GO" id="GO:0070814">
    <property type="term" value="P:hydrogen sulfide biosynthetic process"/>
    <property type="evidence" value="ECO:0007669"/>
    <property type="project" value="UniProtKB-UniRule"/>
</dbReference>
<dbReference type="GO" id="GO:0000103">
    <property type="term" value="P:sulfate assimilation"/>
    <property type="evidence" value="ECO:0007669"/>
    <property type="project" value="UniProtKB-UniRule"/>
</dbReference>
<dbReference type="CDD" id="cd23946">
    <property type="entry name" value="Sulfate_adenylyltransferase_2"/>
    <property type="match status" value="1"/>
</dbReference>
<dbReference type="FunFam" id="3.40.50.620:FF:000002">
    <property type="entry name" value="Sulfate adenylyltransferase subunit 2"/>
    <property type="match status" value="1"/>
</dbReference>
<dbReference type="Gene3D" id="3.40.50.620">
    <property type="entry name" value="HUPs"/>
    <property type="match status" value="1"/>
</dbReference>
<dbReference type="HAMAP" id="MF_00064">
    <property type="entry name" value="Sulf_adenylyltr_sub2"/>
    <property type="match status" value="1"/>
</dbReference>
<dbReference type="InterPro" id="IPR002500">
    <property type="entry name" value="PAPS_reduct_dom"/>
</dbReference>
<dbReference type="InterPro" id="IPR014729">
    <property type="entry name" value="Rossmann-like_a/b/a_fold"/>
</dbReference>
<dbReference type="InterPro" id="IPR011784">
    <property type="entry name" value="SO4_adenylTrfase_ssu"/>
</dbReference>
<dbReference type="InterPro" id="IPR050128">
    <property type="entry name" value="Sulfate_adenylyltrnsfr_sub2"/>
</dbReference>
<dbReference type="NCBIfam" id="TIGR02039">
    <property type="entry name" value="CysD"/>
    <property type="match status" value="1"/>
</dbReference>
<dbReference type="NCBIfam" id="NF003587">
    <property type="entry name" value="PRK05253.1"/>
    <property type="match status" value="1"/>
</dbReference>
<dbReference type="NCBIfam" id="NF009214">
    <property type="entry name" value="PRK12563.1"/>
    <property type="match status" value="1"/>
</dbReference>
<dbReference type="PANTHER" id="PTHR43196">
    <property type="entry name" value="SULFATE ADENYLYLTRANSFERASE SUBUNIT 2"/>
    <property type="match status" value="1"/>
</dbReference>
<dbReference type="PANTHER" id="PTHR43196:SF1">
    <property type="entry name" value="SULFATE ADENYLYLTRANSFERASE SUBUNIT 2"/>
    <property type="match status" value="1"/>
</dbReference>
<dbReference type="Pfam" id="PF01507">
    <property type="entry name" value="PAPS_reduct"/>
    <property type="match status" value="1"/>
</dbReference>
<dbReference type="PIRSF" id="PIRSF002936">
    <property type="entry name" value="CysDAde_trans"/>
    <property type="match status" value="1"/>
</dbReference>
<dbReference type="SUPFAM" id="SSF52402">
    <property type="entry name" value="Adenine nucleotide alpha hydrolases-like"/>
    <property type="match status" value="1"/>
</dbReference>
<reference key="1">
    <citation type="journal article" date="2009" name="Genome Biol.">
        <title>Genomic and genetic analyses of diversity and plant interactions of Pseudomonas fluorescens.</title>
        <authorList>
            <person name="Silby M.W."/>
            <person name="Cerdeno-Tarraga A.M."/>
            <person name="Vernikos G.S."/>
            <person name="Giddens S.R."/>
            <person name="Jackson R.W."/>
            <person name="Preston G.M."/>
            <person name="Zhang X.-X."/>
            <person name="Moon C.D."/>
            <person name="Gehrig S.M."/>
            <person name="Godfrey S.A.C."/>
            <person name="Knight C.G."/>
            <person name="Malone J.G."/>
            <person name="Robinson Z."/>
            <person name="Spiers A.J."/>
            <person name="Harris S."/>
            <person name="Challis G.L."/>
            <person name="Yaxley A.M."/>
            <person name="Harris D."/>
            <person name="Seeger K."/>
            <person name="Murphy L."/>
            <person name="Rutter S."/>
            <person name="Squares R."/>
            <person name="Quail M.A."/>
            <person name="Saunders E."/>
            <person name="Mavromatis K."/>
            <person name="Brettin T.S."/>
            <person name="Bentley S.D."/>
            <person name="Hothersall J."/>
            <person name="Stephens E."/>
            <person name="Thomas C.M."/>
            <person name="Parkhill J."/>
            <person name="Levy S.B."/>
            <person name="Rainey P.B."/>
            <person name="Thomson N.R."/>
        </authorList>
    </citation>
    <scope>NUCLEOTIDE SEQUENCE [LARGE SCALE GENOMIC DNA]</scope>
    <source>
        <strain>Pf0-1</strain>
    </source>
</reference>
<name>CYSD_PSEPF</name>
<gene>
    <name evidence="1" type="primary">cysD</name>
    <name type="ordered locus">Pfl01_0877</name>
</gene>
<comment type="function">
    <text evidence="1">With CysN forms the ATP sulfurylase (ATPS) that catalyzes the adenylation of sulfate producing adenosine 5'-phosphosulfate (APS) and diphosphate, the first enzymatic step in sulfur assimilation pathway. APS synthesis involves the formation of a high-energy phosphoric-sulfuric acid anhydride bond driven by GTP hydrolysis by CysN coupled to ATP hydrolysis by CysD.</text>
</comment>
<comment type="catalytic activity">
    <reaction evidence="1">
        <text>sulfate + ATP + H(+) = adenosine 5'-phosphosulfate + diphosphate</text>
        <dbReference type="Rhea" id="RHEA:18133"/>
        <dbReference type="ChEBI" id="CHEBI:15378"/>
        <dbReference type="ChEBI" id="CHEBI:16189"/>
        <dbReference type="ChEBI" id="CHEBI:30616"/>
        <dbReference type="ChEBI" id="CHEBI:33019"/>
        <dbReference type="ChEBI" id="CHEBI:58243"/>
        <dbReference type="EC" id="2.7.7.4"/>
    </reaction>
</comment>
<comment type="pathway">
    <text evidence="1">Sulfur metabolism; hydrogen sulfide biosynthesis; sulfite from sulfate: step 1/3.</text>
</comment>
<comment type="subunit">
    <text evidence="1">Heterodimer composed of CysD, the smaller subunit, and CysN.</text>
</comment>
<comment type="similarity">
    <text evidence="1">Belongs to the PAPS reductase family. CysD subfamily.</text>
</comment>